<reference key="1">
    <citation type="journal article" date="2003" name="Plant Mol. Biol.">
        <title>Tobacco bZIP factor TGA10 is a novel member of the TGA family of transcription factors.</title>
        <authorList>
            <person name="Schiermeyer A."/>
            <person name="Thurow C."/>
            <person name="Gatz C."/>
        </authorList>
    </citation>
    <scope>NUCLEOTIDE SEQUENCE [MRNA]</scope>
    <scope>FUNCTION</scope>
    <scope>TISSUE SPECIFICITY</scope>
    <scope>INTERACTION WITH TGA2.2</scope>
    <source>
        <strain>cv. SNN</strain>
    </source>
</reference>
<feature type="chain" id="PRO_0000438995" description="bZIP transcription factor TGA10">
    <location>
        <begin position="1"/>
        <end position="506"/>
    </location>
</feature>
<feature type="domain" description="bZIP" evidence="3">
    <location>
        <begin position="213"/>
        <end position="257"/>
    </location>
</feature>
<feature type="domain" description="DOG1" evidence="4">
    <location>
        <begin position="288"/>
        <end position="502"/>
    </location>
</feature>
<feature type="region of interest" description="Disordered" evidence="5">
    <location>
        <begin position="22"/>
        <end position="50"/>
    </location>
</feature>
<feature type="region of interest" description="Disordered" evidence="5">
    <location>
        <begin position="113"/>
        <end position="218"/>
    </location>
</feature>
<feature type="region of interest" description="Basic motif" evidence="3">
    <location>
        <begin position="215"/>
        <end position="235"/>
    </location>
</feature>
<feature type="region of interest" description="Leucine-zipper" evidence="3">
    <location>
        <begin position="241"/>
        <end position="255"/>
    </location>
</feature>
<feature type="short sequence motif" description="Nuclear localization signal" evidence="2">
    <location>
        <begin position="217"/>
        <end position="224"/>
    </location>
</feature>
<feature type="compositionally biased region" description="Polar residues" evidence="5">
    <location>
        <begin position="25"/>
        <end position="45"/>
    </location>
</feature>
<feature type="compositionally biased region" description="Polar residues" evidence="5">
    <location>
        <begin position="113"/>
        <end position="124"/>
    </location>
</feature>
<feature type="compositionally biased region" description="Polar residues" evidence="5">
    <location>
        <begin position="142"/>
        <end position="152"/>
    </location>
</feature>
<feature type="compositionally biased region" description="Polar residues" evidence="5">
    <location>
        <begin position="160"/>
        <end position="180"/>
    </location>
</feature>
<feature type="compositionally biased region" description="Basic and acidic residues" evidence="5">
    <location>
        <begin position="207"/>
        <end position="216"/>
    </location>
</feature>
<organism>
    <name type="scientific">Nicotiana tabacum</name>
    <name type="common">Common tobacco</name>
    <dbReference type="NCBI Taxonomy" id="4097"/>
    <lineage>
        <taxon>Eukaryota</taxon>
        <taxon>Viridiplantae</taxon>
        <taxon>Streptophyta</taxon>
        <taxon>Embryophyta</taxon>
        <taxon>Tracheophyta</taxon>
        <taxon>Spermatophyta</taxon>
        <taxon>Magnoliopsida</taxon>
        <taxon>eudicotyledons</taxon>
        <taxon>Gunneridae</taxon>
        <taxon>Pentapetalae</taxon>
        <taxon>asterids</taxon>
        <taxon>lamiids</taxon>
        <taxon>Solanales</taxon>
        <taxon>Solanaceae</taxon>
        <taxon>Nicotianoideae</taxon>
        <taxon>Nicotianeae</taxon>
        <taxon>Nicotiana</taxon>
    </lineage>
</organism>
<dbReference type="EMBL" id="AY998018">
    <property type="protein sequence ID" value="AAY15214.1"/>
    <property type="molecule type" value="mRNA"/>
</dbReference>
<dbReference type="RefSeq" id="NP_001312680.1">
    <property type="nucleotide sequence ID" value="NM_001325751.1"/>
</dbReference>
<dbReference type="SMR" id="Q52MZ2"/>
<dbReference type="IntAct" id="Q52MZ2">
    <property type="interactions" value="1"/>
</dbReference>
<dbReference type="STRING" id="4097.Q52MZ2"/>
<dbReference type="PaxDb" id="4097-Q52MZ2"/>
<dbReference type="GeneID" id="107804246"/>
<dbReference type="KEGG" id="nta:107804246"/>
<dbReference type="OrthoDB" id="2015618at2759"/>
<dbReference type="Proteomes" id="UP000084051">
    <property type="component" value="Unplaced"/>
</dbReference>
<dbReference type="GO" id="GO:0005634">
    <property type="term" value="C:nucleus"/>
    <property type="evidence" value="ECO:0007669"/>
    <property type="project" value="UniProtKB-SubCell"/>
</dbReference>
<dbReference type="GO" id="GO:0003700">
    <property type="term" value="F:DNA-binding transcription factor activity"/>
    <property type="evidence" value="ECO:0000314"/>
    <property type="project" value="UniProtKB"/>
</dbReference>
<dbReference type="GO" id="GO:0043565">
    <property type="term" value="F:sequence-specific DNA binding"/>
    <property type="evidence" value="ECO:0000314"/>
    <property type="project" value="UniProtKB"/>
</dbReference>
<dbReference type="GO" id="GO:0006351">
    <property type="term" value="P:DNA-templated transcription"/>
    <property type="evidence" value="ECO:0007669"/>
    <property type="project" value="InterPro"/>
</dbReference>
<dbReference type="GO" id="GO:0045893">
    <property type="term" value="P:positive regulation of DNA-templated transcription"/>
    <property type="evidence" value="ECO:0000314"/>
    <property type="project" value="UniProtKB"/>
</dbReference>
<dbReference type="GO" id="GO:0009733">
    <property type="term" value="P:response to auxin"/>
    <property type="evidence" value="ECO:0000315"/>
    <property type="project" value="UniProtKB"/>
</dbReference>
<dbReference type="GO" id="GO:0009753">
    <property type="term" value="P:response to jasmonic acid"/>
    <property type="evidence" value="ECO:0000315"/>
    <property type="project" value="UniProtKB"/>
</dbReference>
<dbReference type="GO" id="GO:0009751">
    <property type="term" value="P:response to salicylic acid"/>
    <property type="evidence" value="ECO:0000315"/>
    <property type="project" value="UniProtKB"/>
</dbReference>
<dbReference type="CDD" id="cd14708">
    <property type="entry name" value="bZIP_HBP1b-like"/>
    <property type="match status" value="1"/>
</dbReference>
<dbReference type="FunFam" id="1.20.5.170:FF:000019">
    <property type="entry name" value="BZIP family transcription factor"/>
    <property type="match status" value="1"/>
</dbReference>
<dbReference type="Gene3D" id="1.20.5.170">
    <property type="match status" value="1"/>
</dbReference>
<dbReference type="InterPro" id="IPR004827">
    <property type="entry name" value="bZIP"/>
</dbReference>
<dbReference type="InterPro" id="IPR046347">
    <property type="entry name" value="bZIP_sf"/>
</dbReference>
<dbReference type="InterPro" id="IPR025422">
    <property type="entry name" value="TGA_domain"/>
</dbReference>
<dbReference type="PANTHER" id="PTHR45693:SF13">
    <property type="entry name" value="TRANSCRIPTION FACTOR TGA10"/>
    <property type="match status" value="1"/>
</dbReference>
<dbReference type="PANTHER" id="PTHR45693">
    <property type="entry name" value="TRANSCRIPTION FACTOR TGA9"/>
    <property type="match status" value="1"/>
</dbReference>
<dbReference type="Pfam" id="PF00170">
    <property type="entry name" value="bZIP_1"/>
    <property type="match status" value="1"/>
</dbReference>
<dbReference type="Pfam" id="PF14144">
    <property type="entry name" value="DOG1"/>
    <property type="match status" value="1"/>
</dbReference>
<dbReference type="SMART" id="SM00338">
    <property type="entry name" value="BRLZ"/>
    <property type="match status" value="1"/>
</dbReference>
<dbReference type="SUPFAM" id="SSF57959">
    <property type="entry name" value="Leucine zipper domain"/>
    <property type="match status" value="1"/>
</dbReference>
<dbReference type="PROSITE" id="PS50217">
    <property type="entry name" value="BZIP"/>
    <property type="match status" value="1"/>
</dbReference>
<dbReference type="PROSITE" id="PS00036">
    <property type="entry name" value="BZIP_BASIC"/>
    <property type="match status" value="1"/>
</dbReference>
<dbReference type="PROSITE" id="PS51806">
    <property type="entry name" value="DOG1"/>
    <property type="match status" value="1"/>
</dbReference>
<gene>
    <name evidence="7" type="primary">TGA10</name>
</gene>
<accession>Q52MZ2</accession>
<sequence length="506" mass="57114">MGFERAFVESSPEQENKLFVGVSYMDSSNKNQDPSESNNQISFGGQHQHHQQQFFYNHHQQQQLQNNNQVSFGMMQQSSSAIPGSLISKDSAGAYDLGELDQALFQYLDGQEPSSIQEQRQNSGMRPPTLNIFPSQPMHVEPSTTNKMNTGLVSPAISGSKRSSQPSMELSNNLKNNDAPSASGPEPPKAAKREGNRKGPTSSSEQDAPKTPDPKTLRRLAQNREAARKSRLRKKAYVQQLESSRIRLTQLEQELQRARAQGYYFGGNSLLGGEQNLPVNLANMSSDAAVFDMEYARWLEEHHRLMCELRNAVQEHFPENELRIYVDNCVTHYDEIMNLKSMLTKSDVFHLVSGMWKTPAERCFMWMGGFRPSELLKIILSQIEPLTEQQLMGICGLQQSTQEAEDALSQGLEALNHSLSDTIASDALSCPQNMANYMGQMALAMNKLSTLEGFVRQADNLRHQTIHRLHQLLTTRQAARCFLAIAEYFHRLRALSSLWHARPRQE</sequence>
<evidence type="ECO:0000250" key="1">
    <source>
        <dbReference type="UniProtKB" id="Q39140"/>
    </source>
</evidence>
<evidence type="ECO:0000255" key="2">
    <source>
        <dbReference type="PROSITE-ProRule" id="PRU00768"/>
    </source>
</evidence>
<evidence type="ECO:0000255" key="3">
    <source>
        <dbReference type="PROSITE-ProRule" id="PRU00978"/>
    </source>
</evidence>
<evidence type="ECO:0000255" key="4">
    <source>
        <dbReference type="PROSITE-ProRule" id="PRU01147"/>
    </source>
</evidence>
<evidence type="ECO:0000256" key="5">
    <source>
        <dbReference type="SAM" id="MobiDB-lite"/>
    </source>
</evidence>
<evidence type="ECO:0000269" key="6">
    <source>
    </source>
</evidence>
<evidence type="ECO:0000303" key="7">
    <source>
    </source>
</evidence>
<evidence type="ECO:0000305" key="8"/>
<protein>
    <recommendedName>
        <fullName evidence="7">bZIP transcription factor TGA10</fullName>
    </recommendedName>
    <alternativeName>
        <fullName evidence="7">Protein TGACG (TGA) motif-binding protein 10</fullName>
    </alternativeName>
</protein>
<name>TGA10_TOBAC</name>
<comment type="function">
    <text evidence="6">Transcription activator that binds to as1-like elements (5'-TGACGTAAgggaTGACGCA-3') in promoters of target genes. Regulates transcription in response to plant signaling molecules salicylic acid (SA), methyl jasmonate (MJ) and auxin (2,4D) only in leaves. Prevents lateral branching and may repress defense signaling.</text>
</comment>
<comment type="subunit">
    <text evidence="1 6">Binds DNA as a dimer (By similarity). Interacts with TGA2.2 (PubMed:12777042).</text>
</comment>
<comment type="subcellular location">
    <subcellularLocation>
        <location evidence="2 3">Nucleus</location>
    </subcellularLocation>
</comment>
<comment type="tissue specificity">
    <text evidence="6">Specifically expressed in roots.</text>
</comment>
<comment type="similarity">
    <text evidence="8">Belongs to the bZIP family.</text>
</comment>
<proteinExistence type="evidence at protein level"/>
<keyword id="KW-0010">Activator</keyword>
<keyword id="KW-0238">DNA-binding</keyword>
<keyword id="KW-0539">Nucleus</keyword>
<keyword id="KW-1185">Reference proteome</keyword>
<keyword id="KW-0804">Transcription</keyword>
<keyword id="KW-0805">Transcription regulation</keyword>